<gene>
    <name evidence="1" type="primary">minC</name>
    <name type="ordered locus">SPAB_01402</name>
</gene>
<feature type="chain" id="PRO_1000078655" description="Probable septum site-determining protein MinC">
    <location>
        <begin position="1"/>
        <end position="235"/>
    </location>
</feature>
<feature type="region of interest" description="Disordered" evidence="2">
    <location>
        <begin position="104"/>
        <end position="125"/>
    </location>
</feature>
<feature type="compositionally biased region" description="Pro residues" evidence="2">
    <location>
        <begin position="110"/>
        <end position="119"/>
    </location>
</feature>
<sequence>MSNTPIELKGSSFTLSVVHLHEAEPEVIRQALEDKIAQAPAFLKHAPVVINVSGLESPVNWPELHKIVTSTGLRIIGVSGCKDASLKVEIDRMGLPLLTEGKEKAVRPAPVEPATPSEPPQNANPITKTRLIDVPVRSGQRIYAPQCDLIVTSHVSAGAELIADGNIHVYGMMRGRALAGASGDREAQIFCTHLTAELVSIAGVYWLSDKIPAEFYGKAARLRLADNALTVQPLN</sequence>
<protein>
    <recommendedName>
        <fullName evidence="1">Probable septum site-determining protein MinC</fullName>
    </recommendedName>
</protein>
<proteinExistence type="inferred from homology"/>
<keyword id="KW-0131">Cell cycle</keyword>
<keyword id="KW-0132">Cell division</keyword>
<keyword id="KW-0717">Septation</keyword>
<accession>A9MVV3</accession>
<evidence type="ECO:0000255" key="1">
    <source>
        <dbReference type="HAMAP-Rule" id="MF_00267"/>
    </source>
</evidence>
<evidence type="ECO:0000256" key="2">
    <source>
        <dbReference type="SAM" id="MobiDB-lite"/>
    </source>
</evidence>
<comment type="function">
    <text evidence="1">Cell division inhibitor that blocks the formation of polar Z ring septums. Rapidly oscillates between the poles of the cell to destabilize FtsZ filaments that have formed before they mature into polar Z rings. Prevents FtsZ polymerization.</text>
</comment>
<comment type="subunit">
    <text evidence="1">Interacts with MinD and FtsZ.</text>
</comment>
<comment type="similarity">
    <text evidence="1">Belongs to the MinC family.</text>
</comment>
<organism>
    <name type="scientific">Salmonella paratyphi B (strain ATCC BAA-1250 / SPB7)</name>
    <dbReference type="NCBI Taxonomy" id="1016998"/>
    <lineage>
        <taxon>Bacteria</taxon>
        <taxon>Pseudomonadati</taxon>
        <taxon>Pseudomonadota</taxon>
        <taxon>Gammaproteobacteria</taxon>
        <taxon>Enterobacterales</taxon>
        <taxon>Enterobacteriaceae</taxon>
        <taxon>Salmonella</taxon>
    </lineage>
</organism>
<dbReference type="EMBL" id="CP000886">
    <property type="protein sequence ID" value="ABX66809.1"/>
    <property type="molecule type" value="Genomic_DNA"/>
</dbReference>
<dbReference type="RefSeq" id="WP_000072527.1">
    <property type="nucleotide sequence ID" value="NC_010102.1"/>
</dbReference>
<dbReference type="SMR" id="A9MVV3"/>
<dbReference type="KEGG" id="spq:SPAB_01402"/>
<dbReference type="PATRIC" id="fig|1016998.12.peg.1321"/>
<dbReference type="HOGENOM" id="CLU_067812_0_1_6"/>
<dbReference type="BioCyc" id="SENT1016998:SPAB_RS05740-MONOMER"/>
<dbReference type="Proteomes" id="UP000008556">
    <property type="component" value="Chromosome"/>
</dbReference>
<dbReference type="GO" id="GO:0000902">
    <property type="term" value="P:cell morphogenesis"/>
    <property type="evidence" value="ECO:0007669"/>
    <property type="project" value="InterPro"/>
</dbReference>
<dbReference type="GO" id="GO:0000917">
    <property type="term" value="P:division septum assembly"/>
    <property type="evidence" value="ECO:0007669"/>
    <property type="project" value="UniProtKB-KW"/>
</dbReference>
<dbReference type="GO" id="GO:0051302">
    <property type="term" value="P:regulation of cell division"/>
    <property type="evidence" value="ECO:0007669"/>
    <property type="project" value="InterPro"/>
</dbReference>
<dbReference type="GO" id="GO:1901891">
    <property type="term" value="P:regulation of cell septum assembly"/>
    <property type="evidence" value="ECO:0007669"/>
    <property type="project" value="InterPro"/>
</dbReference>
<dbReference type="FunFam" id="2.160.20.70:FF:000002">
    <property type="entry name" value="Probable septum site-determining protein MinC"/>
    <property type="match status" value="1"/>
</dbReference>
<dbReference type="Gene3D" id="2.160.20.70">
    <property type="match status" value="1"/>
</dbReference>
<dbReference type="Gene3D" id="3.30.70.260">
    <property type="match status" value="1"/>
</dbReference>
<dbReference type="HAMAP" id="MF_00267">
    <property type="entry name" value="MinC"/>
    <property type="match status" value="1"/>
</dbReference>
<dbReference type="InterPro" id="IPR016098">
    <property type="entry name" value="CAP/MinC_C"/>
</dbReference>
<dbReference type="InterPro" id="IPR013033">
    <property type="entry name" value="MinC"/>
</dbReference>
<dbReference type="InterPro" id="IPR036145">
    <property type="entry name" value="MinC_C_sf"/>
</dbReference>
<dbReference type="InterPro" id="IPR007874">
    <property type="entry name" value="MinC_N"/>
</dbReference>
<dbReference type="InterPro" id="IPR005526">
    <property type="entry name" value="Septum_form_inhib_MinC_C"/>
</dbReference>
<dbReference type="NCBIfam" id="TIGR01222">
    <property type="entry name" value="minC"/>
    <property type="match status" value="1"/>
</dbReference>
<dbReference type="PANTHER" id="PTHR34108">
    <property type="entry name" value="SEPTUM SITE-DETERMINING PROTEIN MINC"/>
    <property type="match status" value="1"/>
</dbReference>
<dbReference type="PANTHER" id="PTHR34108:SF1">
    <property type="entry name" value="SEPTUM SITE-DETERMINING PROTEIN MINC"/>
    <property type="match status" value="1"/>
</dbReference>
<dbReference type="Pfam" id="PF03775">
    <property type="entry name" value="MinC_C"/>
    <property type="match status" value="1"/>
</dbReference>
<dbReference type="Pfam" id="PF05209">
    <property type="entry name" value="MinC_N"/>
    <property type="match status" value="1"/>
</dbReference>
<dbReference type="SUPFAM" id="SSF63848">
    <property type="entry name" value="Cell-division inhibitor MinC, C-terminal domain"/>
    <property type="match status" value="1"/>
</dbReference>
<name>MINC_SALPB</name>
<reference key="1">
    <citation type="submission" date="2007-11" db="EMBL/GenBank/DDBJ databases">
        <authorList>
            <consortium name="The Salmonella enterica serovar Paratyphi B Genome Sequencing Project"/>
            <person name="McClelland M."/>
            <person name="Sanderson E.K."/>
            <person name="Porwollik S."/>
            <person name="Spieth J."/>
            <person name="Clifton W.S."/>
            <person name="Fulton R."/>
            <person name="Cordes M."/>
            <person name="Wollam A."/>
            <person name="Shah N."/>
            <person name="Pepin K."/>
            <person name="Bhonagiri V."/>
            <person name="Nash W."/>
            <person name="Johnson M."/>
            <person name="Thiruvilangam P."/>
            <person name="Wilson R."/>
        </authorList>
    </citation>
    <scope>NUCLEOTIDE SEQUENCE [LARGE SCALE GENOMIC DNA]</scope>
    <source>
        <strain>ATCC BAA-1250 / SPB7</strain>
    </source>
</reference>